<comment type="similarity">
    <text evidence="1">Belongs to the UPF0250 family.</text>
</comment>
<name>YBED_ECOSM</name>
<reference key="1">
    <citation type="journal article" date="2008" name="J. Bacteriol.">
        <title>Insights into the environmental resistance gene pool from the genome sequence of the multidrug-resistant environmental isolate Escherichia coli SMS-3-5.</title>
        <authorList>
            <person name="Fricke W.F."/>
            <person name="Wright M.S."/>
            <person name="Lindell A.H."/>
            <person name="Harkins D.M."/>
            <person name="Baker-Austin C."/>
            <person name="Ravel J."/>
            <person name="Stepanauskas R."/>
        </authorList>
    </citation>
    <scope>NUCLEOTIDE SEQUENCE [LARGE SCALE GENOMIC DNA]</scope>
    <source>
        <strain>SMS-3-5 / SECEC</strain>
    </source>
</reference>
<accession>B1LKM2</accession>
<gene>
    <name evidence="1" type="primary">ybeD</name>
    <name type="ordered locus">EcSMS35_0651</name>
</gene>
<dbReference type="EMBL" id="CP000970">
    <property type="protein sequence ID" value="ACB17884.1"/>
    <property type="molecule type" value="Genomic_DNA"/>
</dbReference>
<dbReference type="RefSeq" id="WP_000850550.1">
    <property type="nucleotide sequence ID" value="NC_010498.1"/>
</dbReference>
<dbReference type="SMR" id="B1LKM2"/>
<dbReference type="GeneID" id="93776851"/>
<dbReference type="KEGG" id="ecm:EcSMS35_0651"/>
<dbReference type="HOGENOM" id="CLU_161438_2_1_6"/>
<dbReference type="Proteomes" id="UP000007011">
    <property type="component" value="Chromosome"/>
</dbReference>
<dbReference type="GO" id="GO:0005829">
    <property type="term" value="C:cytosol"/>
    <property type="evidence" value="ECO:0007669"/>
    <property type="project" value="TreeGrafter"/>
</dbReference>
<dbReference type="FunFam" id="3.30.70.260:FF:000002">
    <property type="entry name" value="UPF0250 protein YbeD"/>
    <property type="match status" value="1"/>
</dbReference>
<dbReference type="Gene3D" id="3.30.70.260">
    <property type="match status" value="1"/>
</dbReference>
<dbReference type="HAMAP" id="MF_00659">
    <property type="entry name" value="UPF0250"/>
    <property type="match status" value="1"/>
</dbReference>
<dbReference type="InterPro" id="IPR007454">
    <property type="entry name" value="UPF0250_YbeD-like"/>
</dbReference>
<dbReference type="InterPro" id="IPR027471">
    <property type="entry name" value="YbeD-like_sf"/>
</dbReference>
<dbReference type="NCBIfam" id="NF003447">
    <property type="entry name" value="PRK04998.1"/>
    <property type="match status" value="1"/>
</dbReference>
<dbReference type="PANTHER" id="PTHR38036">
    <property type="entry name" value="UPF0250 PROTEIN YBED"/>
    <property type="match status" value="1"/>
</dbReference>
<dbReference type="PANTHER" id="PTHR38036:SF1">
    <property type="entry name" value="UPF0250 PROTEIN YBED"/>
    <property type="match status" value="1"/>
</dbReference>
<dbReference type="Pfam" id="PF04359">
    <property type="entry name" value="DUF493"/>
    <property type="match status" value="1"/>
</dbReference>
<dbReference type="SUPFAM" id="SSF117991">
    <property type="entry name" value="YbeD/HP0495-like"/>
    <property type="match status" value="1"/>
</dbReference>
<organism>
    <name type="scientific">Escherichia coli (strain SMS-3-5 / SECEC)</name>
    <dbReference type="NCBI Taxonomy" id="439855"/>
    <lineage>
        <taxon>Bacteria</taxon>
        <taxon>Pseudomonadati</taxon>
        <taxon>Pseudomonadota</taxon>
        <taxon>Gammaproteobacteria</taxon>
        <taxon>Enterobacterales</taxon>
        <taxon>Enterobacteriaceae</taxon>
        <taxon>Escherichia</taxon>
    </lineage>
</organism>
<feature type="chain" id="PRO_1000131245" description="UPF0250 protein YbeD">
    <location>
        <begin position="1"/>
        <end position="87"/>
    </location>
</feature>
<sequence>MKTKLNELLEFPTPFTYKVMGQALPELVDQVVEVVQRHAPGDYTPTVKPSSKGNYHSVSITINATHIEQVETLYEELGKIDIVRMVL</sequence>
<proteinExistence type="inferred from homology"/>
<evidence type="ECO:0000255" key="1">
    <source>
        <dbReference type="HAMAP-Rule" id="MF_00659"/>
    </source>
</evidence>
<protein>
    <recommendedName>
        <fullName evidence="1">UPF0250 protein YbeD</fullName>
    </recommendedName>
</protein>